<dbReference type="EC" id="2.1.1.225"/>
<dbReference type="EMBL" id="CR382137">
    <property type="protein sequence ID" value="CAG88318.2"/>
    <property type="molecule type" value="Genomic_DNA"/>
</dbReference>
<dbReference type="RefSeq" id="XP_460060.2">
    <property type="nucleotide sequence ID" value="XM_460060.1"/>
</dbReference>
<dbReference type="FunCoup" id="Q6BP10">
    <property type="interactions" value="490"/>
</dbReference>
<dbReference type="STRING" id="284592.Q6BP10"/>
<dbReference type="GeneID" id="2902249"/>
<dbReference type="KEGG" id="dha:DEHA2E17446g"/>
<dbReference type="VEuPathDB" id="FungiDB:DEHA2E17446g"/>
<dbReference type="eggNOG" id="KOG2811">
    <property type="taxonomic scope" value="Eukaryota"/>
</dbReference>
<dbReference type="HOGENOM" id="CLU_027610_1_0_1"/>
<dbReference type="InParanoid" id="Q6BP10"/>
<dbReference type="OMA" id="HRCSWRS"/>
<dbReference type="OrthoDB" id="258806at2759"/>
<dbReference type="Proteomes" id="UP000000599">
    <property type="component" value="Chromosome E"/>
</dbReference>
<dbReference type="GO" id="GO:0005737">
    <property type="term" value="C:cytoplasm"/>
    <property type="evidence" value="ECO:0007669"/>
    <property type="project" value="UniProtKB-SubCell"/>
</dbReference>
<dbReference type="GO" id="GO:0005730">
    <property type="term" value="C:nucleolus"/>
    <property type="evidence" value="ECO:0007669"/>
    <property type="project" value="UniProtKB-SubCell"/>
</dbReference>
<dbReference type="GO" id="GO:0106050">
    <property type="term" value="F:tRNA 2'-O-methyltransferase activity"/>
    <property type="evidence" value="ECO:0007669"/>
    <property type="project" value="EnsemblFungi"/>
</dbReference>
<dbReference type="GO" id="GO:0008270">
    <property type="term" value="F:zinc ion binding"/>
    <property type="evidence" value="ECO:0007669"/>
    <property type="project" value="UniProtKB-KW"/>
</dbReference>
<dbReference type="GO" id="GO:0002128">
    <property type="term" value="P:tRNA nucleoside ribose methylation"/>
    <property type="evidence" value="ECO:0007669"/>
    <property type="project" value="EnsemblFungi"/>
</dbReference>
<dbReference type="InterPro" id="IPR007871">
    <property type="entry name" value="Methyltransferase_TRM13"/>
</dbReference>
<dbReference type="InterPro" id="IPR039044">
    <property type="entry name" value="Trm13"/>
</dbReference>
<dbReference type="InterPro" id="IPR022776">
    <property type="entry name" value="TRM13/UPF0224_CHHC_Znf_dom"/>
</dbReference>
<dbReference type="InterPro" id="IPR021721">
    <property type="entry name" value="Znf_CCCH-type_TRM13"/>
</dbReference>
<dbReference type="PANTHER" id="PTHR12998">
    <property type="entry name" value="TRNA:M(4)X MODIFICATION ENZYME TRM13 HOMOLOG"/>
    <property type="match status" value="1"/>
</dbReference>
<dbReference type="PANTHER" id="PTHR12998:SF0">
    <property type="entry name" value="TRNA:M(4)X MODIFICATION ENZYME TRM13 HOMOLOG"/>
    <property type="match status" value="1"/>
</dbReference>
<dbReference type="Pfam" id="PF05206">
    <property type="entry name" value="TRM13"/>
    <property type="match status" value="1"/>
</dbReference>
<dbReference type="Pfam" id="PF11722">
    <property type="entry name" value="zf-TRM13_CCCH"/>
    <property type="match status" value="1"/>
</dbReference>
<dbReference type="Pfam" id="PF05253">
    <property type="entry name" value="zf-U11-48K"/>
    <property type="match status" value="1"/>
</dbReference>
<dbReference type="PROSITE" id="PS51800">
    <property type="entry name" value="ZF_CHHC_U11_48K"/>
    <property type="match status" value="1"/>
</dbReference>
<comment type="function">
    <text evidence="2">tRNA methylase which 2'-O-methylates cytidine(4) in tRNA(Pro) and tRNA(Gly)(GCC), and adenosine(4) in tRNA(His).</text>
</comment>
<comment type="catalytic activity">
    <reaction evidence="2">
        <text>cytidine(4) in tRNA(Pro) + S-adenosyl-L-methionine = 2'-O-methylcytidine(4) in tRNA(Pro) + S-adenosyl-L-homocysteine + H(+)</text>
        <dbReference type="Rhea" id="RHEA:32767"/>
        <dbReference type="Rhea" id="RHEA-COMP:10397"/>
        <dbReference type="Rhea" id="RHEA-COMP:10398"/>
        <dbReference type="ChEBI" id="CHEBI:15378"/>
        <dbReference type="ChEBI" id="CHEBI:57856"/>
        <dbReference type="ChEBI" id="CHEBI:59789"/>
        <dbReference type="ChEBI" id="CHEBI:74495"/>
        <dbReference type="ChEBI" id="CHEBI:82748"/>
        <dbReference type="EC" id="2.1.1.225"/>
    </reaction>
</comment>
<comment type="catalytic activity">
    <reaction evidence="2">
        <text>cytidine(4) in tRNA(Gly)(GCC) + S-adenosyl-L-methionine = 2'-O-methylcytidine(4) in tRNA(Gly)(GCC) + S-adenosyl-L-homocysteine + H(+)</text>
        <dbReference type="Rhea" id="RHEA:43192"/>
        <dbReference type="Rhea" id="RHEA-COMP:10399"/>
        <dbReference type="Rhea" id="RHEA-COMP:10400"/>
        <dbReference type="ChEBI" id="CHEBI:15378"/>
        <dbReference type="ChEBI" id="CHEBI:57856"/>
        <dbReference type="ChEBI" id="CHEBI:59789"/>
        <dbReference type="ChEBI" id="CHEBI:74495"/>
        <dbReference type="ChEBI" id="CHEBI:82748"/>
        <dbReference type="EC" id="2.1.1.225"/>
    </reaction>
</comment>
<comment type="catalytic activity">
    <reaction evidence="2">
        <text>adenosine(4) in tRNA(His) + S-adenosyl-L-methionine = 2'-O-methyladenosine(4) in tRNA(His) + S-adenosyl-L-homocysteine + H(+)</text>
        <dbReference type="Rhea" id="RHEA:43196"/>
        <dbReference type="Rhea" id="RHEA-COMP:10401"/>
        <dbReference type="Rhea" id="RHEA-COMP:10402"/>
        <dbReference type="ChEBI" id="CHEBI:15378"/>
        <dbReference type="ChEBI" id="CHEBI:57856"/>
        <dbReference type="ChEBI" id="CHEBI:59789"/>
        <dbReference type="ChEBI" id="CHEBI:74411"/>
        <dbReference type="ChEBI" id="CHEBI:74477"/>
        <dbReference type="EC" id="2.1.1.225"/>
    </reaction>
</comment>
<comment type="subcellular location">
    <subcellularLocation>
        <location evidence="1">Cytoplasm</location>
    </subcellularLocation>
    <subcellularLocation>
        <location evidence="1">Nucleus</location>
        <location evidence="1">Nucleolus</location>
    </subcellularLocation>
</comment>
<comment type="similarity">
    <text evidence="5">Belongs to the methyltransferase TRM13 family.</text>
</comment>
<protein>
    <recommendedName>
        <fullName>tRNA:m(4)X modification enzyme TRM13</fullName>
        <ecNumber>2.1.1.225</ecNumber>
    </recommendedName>
    <alternativeName>
        <fullName>tRNA methylase 13</fullName>
    </alternativeName>
</protein>
<sequence>MANIDKEVLASQPDEISKDQKRRKLNKHEKKERTHLQCEYFIAKKNRRCCMQRKADRKYCSEHLVDNNEPDKGERVPCPLDNNHSVWSKNLTNHLKKCNAKPKENEEIWYEKDLNTKLGVDITEDSFKNDGNDNDNEDDDLNEKELYEKYIPILRNIKDHFEPLGFSISKHSGLKNRLSEVSNQKHAIQQSSLIGNMKKRGLLDINKFYLEFGCGKGELSRFVNLSVLEDLQVKDLAGKSKYGYGFIDRGVNRMKMDSKIVKDAKENTIEVNITTKRSKIDIKDLHVDKFLKDIDPEHVVVISKHLCGAATDLTFKSLLNSSLLQGNSDKFGGLLIAMCCRHVCAYDQLLPESRAFLQSKGFRSLSSFNILKKIVSWAVCGKRDGTNEESTGEHISGLTFKEREELGLVARRLIDESRVFAMNLLVNPLGFHTEMFWYVEKEITLENVCLCIIPDSN</sequence>
<feature type="chain" id="PRO_0000339422" description="tRNA:m(4)X modification enzyme TRM13">
    <location>
        <begin position="1"/>
        <end position="457"/>
    </location>
</feature>
<feature type="zinc finger region" description="CHHC U11-48K-type" evidence="3">
    <location>
        <begin position="75"/>
        <end position="102"/>
    </location>
</feature>
<feature type="region of interest" description="Disordered" evidence="4">
    <location>
        <begin position="1"/>
        <end position="29"/>
    </location>
</feature>
<feature type="binding site" evidence="3">
    <location>
        <position position="78"/>
    </location>
    <ligand>
        <name>Zn(2+)</name>
        <dbReference type="ChEBI" id="CHEBI:29105"/>
    </ligand>
</feature>
<feature type="binding site" evidence="3">
    <location>
        <position position="84"/>
    </location>
    <ligand>
        <name>Zn(2+)</name>
        <dbReference type="ChEBI" id="CHEBI:29105"/>
    </ligand>
</feature>
<feature type="binding site" evidence="3">
    <location>
        <position position="94"/>
    </location>
    <ligand>
        <name>Zn(2+)</name>
        <dbReference type="ChEBI" id="CHEBI:29105"/>
    </ligand>
</feature>
<feature type="binding site" evidence="3">
    <location>
        <position position="98"/>
    </location>
    <ligand>
        <name>Zn(2+)</name>
        <dbReference type="ChEBI" id="CHEBI:29105"/>
    </ligand>
</feature>
<name>TRM13_DEBHA</name>
<gene>
    <name type="primary">TRM13</name>
    <name type="ordered locus">DEHA2E17446g</name>
</gene>
<keyword id="KW-0963">Cytoplasm</keyword>
<keyword id="KW-0479">Metal-binding</keyword>
<keyword id="KW-0489">Methyltransferase</keyword>
<keyword id="KW-0539">Nucleus</keyword>
<keyword id="KW-1185">Reference proteome</keyword>
<keyword id="KW-0949">S-adenosyl-L-methionine</keyword>
<keyword id="KW-0808">Transferase</keyword>
<keyword id="KW-0819">tRNA processing</keyword>
<keyword id="KW-0862">Zinc</keyword>
<keyword id="KW-0863">Zinc-finger</keyword>
<reference key="1">
    <citation type="journal article" date="2004" name="Nature">
        <title>Genome evolution in yeasts.</title>
        <authorList>
            <person name="Dujon B."/>
            <person name="Sherman D."/>
            <person name="Fischer G."/>
            <person name="Durrens P."/>
            <person name="Casaregola S."/>
            <person name="Lafontaine I."/>
            <person name="de Montigny J."/>
            <person name="Marck C."/>
            <person name="Neuveglise C."/>
            <person name="Talla E."/>
            <person name="Goffard N."/>
            <person name="Frangeul L."/>
            <person name="Aigle M."/>
            <person name="Anthouard V."/>
            <person name="Babour A."/>
            <person name="Barbe V."/>
            <person name="Barnay S."/>
            <person name="Blanchin S."/>
            <person name="Beckerich J.-M."/>
            <person name="Beyne E."/>
            <person name="Bleykasten C."/>
            <person name="Boisrame A."/>
            <person name="Boyer J."/>
            <person name="Cattolico L."/>
            <person name="Confanioleri F."/>
            <person name="de Daruvar A."/>
            <person name="Despons L."/>
            <person name="Fabre E."/>
            <person name="Fairhead C."/>
            <person name="Ferry-Dumazet H."/>
            <person name="Groppi A."/>
            <person name="Hantraye F."/>
            <person name="Hennequin C."/>
            <person name="Jauniaux N."/>
            <person name="Joyet P."/>
            <person name="Kachouri R."/>
            <person name="Kerrest A."/>
            <person name="Koszul R."/>
            <person name="Lemaire M."/>
            <person name="Lesur I."/>
            <person name="Ma L."/>
            <person name="Muller H."/>
            <person name="Nicaud J.-M."/>
            <person name="Nikolski M."/>
            <person name="Oztas S."/>
            <person name="Ozier-Kalogeropoulos O."/>
            <person name="Pellenz S."/>
            <person name="Potier S."/>
            <person name="Richard G.-F."/>
            <person name="Straub M.-L."/>
            <person name="Suleau A."/>
            <person name="Swennen D."/>
            <person name="Tekaia F."/>
            <person name="Wesolowski-Louvel M."/>
            <person name="Westhof E."/>
            <person name="Wirth B."/>
            <person name="Zeniou-Meyer M."/>
            <person name="Zivanovic Y."/>
            <person name="Bolotin-Fukuhara M."/>
            <person name="Thierry A."/>
            <person name="Bouchier C."/>
            <person name="Caudron B."/>
            <person name="Scarpelli C."/>
            <person name="Gaillardin C."/>
            <person name="Weissenbach J."/>
            <person name="Wincker P."/>
            <person name="Souciet J.-L."/>
        </authorList>
    </citation>
    <scope>NUCLEOTIDE SEQUENCE [LARGE SCALE GENOMIC DNA]</scope>
    <source>
        <strain>ATCC 36239 / CBS 767 / BCRC 21394 / JCM 1990 / NBRC 0083 / IGC 2968</strain>
    </source>
</reference>
<proteinExistence type="inferred from homology"/>
<accession>Q6BP10</accession>
<organism>
    <name type="scientific">Debaryomyces hansenii (strain ATCC 36239 / CBS 767 / BCRC 21394 / JCM 1990 / NBRC 0083 / IGC 2968)</name>
    <name type="common">Yeast</name>
    <name type="synonym">Torulaspora hansenii</name>
    <dbReference type="NCBI Taxonomy" id="284592"/>
    <lineage>
        <taxon>Eukaryota</taxon>
        <taxon>Fungi</taxon>
        <taxon>Dikarya</taxon>
        <taxon>Ascomycota</taxon>
        <taxon>Saccharomycotina</taxon>
        <taxon>Pichiomycetes</taxon>
        <taxon>Debaryomycetaceae</taxon>
        <taxon>Debaryomyces</taxon>
    </lineage>
</organism>
<evidence type="ECO:0000250" key="1"/>
<evidence type="ECO:0000250" key="2">
    <source>
        <dbReference type="UniProtKB" id="Q12383"/>
    </source>
</evidence>
<evidence type="ECO:0000255" key="3">
    <source>
        <dbReference type="PROSITE-ProRule" id="PRU01141"/>
    </source>
</evidence>
<evidence type="ECO:0000256" key="4">
    <source>
        <dbReference type="SAM" id="MobiDB-lite"/>
    </source>
</evidence>
<evidence type="ECO:0000305" key="5"/>